<protein>
    <recommendedName>
        <fullName evidence="1">Ribosome-recycling factor</fullName>
        <shortName evidence="1">RRF</shortName>
    </recommendedName>
    <alternativeName>
        <fullName evidence="1">Ribosome-releasing factor</fullName>
    </alternativeName>
</protein>
<keyword id="KW-0963">Cytoplasm</keyword>
<keyword id="KW-0648">Protein biosynthesis</keyword>
<evidence type="ECO:0000255" key="1">
    <source>
        <dbReference type="HAMAP-Rule" id="MF_00040"/>
    </source>
</evidence>
<name>RRF_SALDC</name>
<dbReference type="EMBL" id="CP001144">
    <property type="protein sequence ID" value="ACH73909.1"/>
    <property type="molecule type" value="Genomic_DNA"/>
</dbReference>
<dbReference type="RefSeq" id="WP_000622423.1">
    <property type="nucleotide sequence ID" value="NC_011205.1"/>
</dbReference>
<dbReference type="SMR" id="B5FJ19"/>
<dbReference type="KEGG" id="sed:SeD_A0241"/>
<dbReference type="HOGENOM" id="CLU_073981_2_1_6"/>
<dbReference type="Proteomes" id="UP000008322">
    <property type="component" value="Chromosome"/>
</dbReference>
<dbReference type="GO" id="GO:0005829">
    <property type="term" value="C:cytosol"/>
    <property type="evidence" value="ECO:0007669"/>
    <property type="project" value="GOC"/>
</dbReference>
<dbReference type="GO" id="GO:0043023">
    <property type="term" value="F:ribosomal large subunit binding"/>
    <property type="evidence" value="ECO:0007669"/>
    <property type="project" value="TreeGrafter"/>
</dbReference>
<dbReference type="GO" id="GO:0002184">
    <property type="term" value="P:cytoplasmic translational termination"/>
    <property type="evidence" value="ECO:0007669"/>
    <property type="project" value="TreeGrafter"/>
</dbReference>
<dbReference type="CDD" id="cd00520">
    <property type="entry name" value="RRF"/>
    <property type="match status" value="1"/>
</dbReference>
<dbReference type="FunFam" id="1.10.132.20:FF:000001">
    <property type="entry name" value="Ribosome-recycling factor"/>
    <property type="match status" value="1"/>
</dbReference>
<dbReference type="FunFam" id="3.30.1360.40:FF:000001">
    <property type="entry name" value="Ribosome-recycling factor"/>
    <property type="match status" value="1"/>
</dbReference>
<dbReference type="Gene3D" id="3.30.1360.40">
    <property type="match status" value="1"/>
</dbReference>
<dbReference type="Gene3D" id="1.10.132.20">
    <property type="entry name" value="Ribosome-recycling factor"/>
    <property type="match status" value="1"/>
</dbReference>
<dbReference type="HAMAP" id="MF_00040">
    <property type="entry name" value="RRF"/>
    <property type="match status" value="1"/>
</dbReference>
<dbReference type="InterPro" id="IPR002661">
    <property type="entry name" value="Ribosome_recyc_fac"/>
</dbReference>
<dbReference type="InterPro" id="IPR023584">
    <property type="entry name" value="Ribosome_recyc_fac_dom"/>
</dbReference>
<dbReference type="InterPro" id="IPR036191">
    <property type="entry name" value="RRF_sf"/>
</dbReference>
<dbReference type="NCBIfam" id="TIGR00496">
    <property type="entry name" value="frr"/>
    <property type="match status" value="1"/>
</dbReference>
<dbReference type="PANTHER" id="PTHR20982:SF3">
    <property type="entry name" value="MITOCHONDRIAL RIBOSOME RECYCLING FACTOR PSEUDO 1"/>
    <property type="match status" value="1"/>
</dbReference>
<dbReference type="PANTHER" id="PTHR20982">
    <property type="entry name" value="RIBOSOME RECYCLING FACTOR"/>
    <property type="match status" value="1"/>
</dbReference>
<dbReference type="Pfam" id="PF01765">
    <property type="entry name" value="RRF"/>
    <property type="match status" value="1"/>
</dbReference>
<dbReference type="SUPFAM" id="SSF55194">
    <property type="entry name" value="Ribosome recycling factor, RRF"/>
    <property type="match status" value="1"/>
</dbReference>
<gene>
    <name evidence="1" type="primary">frr</name>
    <name type="ordered locus">SeD_A0241</name>
</gene>
<reference key="1">
    <citation type="journal article" date="2011" name="J. Bacteriol.">
        <title>Comparative genomics of 28 Salmonella enterica isolates: evidence for CRISPR-mediated adaptive sublineage evolution.</title>
        <authorList>
            <person name="Fricke W.F."/>
            <person name="Mammel M.K."/>
            <person name="McDermott P.F."/>
            <person name="Tartera C."/>
            <person name="White D.G."/>
            <person name="Leclerc J.E."/>
            <person name="Ravel J."/>
            <person name="Cebula T.A."/>
        </authorList>
    </citation>
    <scope>NUCLEOTIDE SEQUENCE [LARGE SCALE GENOMIC DNA]</scope>
    <source>
        <strain>CT_02021853</strain>
    </source>
</reference>
<sequence length="185" mass="20556">MISDIRKDAEVRMEKCVEAFKTQISKVRTGRASPSLLDGIVVEYYGTPTPLRQLASVTVEDSRTLKINVFDRSMGPAVEKAIMASDLGLNPSSAGTDIRVPLPPLTEERRKDLTKIVRGEAEQARVAVRNVRRDANDKVKALLKDKAISEDDDRRSQEEVQKMTDAAIKKVDAALADKEAELMQF</sequence>
<accession>B5FJ19</accession>
<organism>
    <name type="scientific">Salmonella dublin (strain CT_02021853)</name>
    <dbReference type="NCBI Taxonomy" id="439851"/>
    <lineage>
        <taxon>Bacteria</taxon>
        <taxon>Pseudomonadati</taxon>
        <taxon>Pseudomonadota</taxon>
        <taxon>Gammaproteobacteria</taxon>
        <taxon>Enterobacterales</taxon>
        <taxon>Enterobacteriaceae</taxon>
        <taxon>Salmonella</taxon>
    </lineage>
</organism>
<feature type="chain" id="PRO_1000090779" description="Ribosome-recycling factor">
    <location>
        <begin position="1"/>
        <end position="185"/>
    </location>
</feature>
<comment type="function">
    <text evidence="1">Responsible for the release of ribosomes from messenger RNA at the termination of protein biosynthesis. May increase the efficiency of translation by recycling ribosomes from one round of translation to another.</text>
</comment>
<comment type="subcellular location">
    <subcellularLocation>
        <location evidence="1">Cytoplasm</location>
    </subcellularLocation>
</comment>
<comment type="similarity">
    <text evidence="1">Belongs to the RRF family.</text>
</comment>
<proteinExistence type="inferred from homology"/>